<dbReference type="EMBL" id="CR857913">
    <property type="protein sequence ID" value="CAH90162.1"/>
    <property type="molecule type" value="mRNA"/>
</dbReference>
<dbReference type="RefSeq" id="NP_001125049.1">
    <property type="nucleotide sequence ID" value="NM_001131577.1"/>
</dbReference>
<dbReference type="SMR" id="Q5RDJ5"/>
<dbReference type="FunCoup" id="Q5RDJ5">
    <property type="interactions" value="2470"/>
</dbReference>
<dbReference type="STRING" id="9601.ENSPPYP00000008474"/>
<dbReference type="Ensembl" id="ENSPPYT00000048262.1">
    <property type="protein sequence ID" value="ENSPPYP00000028686.1"/>
    <property type="gene ID" value="ENSPPYG00000036767.1"/>
</dbReference>
<dbReference type="GeneID" id="100171930"/>
<dbReference type="KEGG" id="pon:100171930"/>
<dbReference type="CTD" id="80777"/>
<dbReference type="eggNOG" id="KOG0537">
    <property type="taxonomic scope" value="Eukaryota"/>
</dbReference>
<dbReference type="GeneTree" id="ENSGT00940000155584"/>
<dbReference type="HOGENOM" id="CLU_102602_3_3_1"/>
<dbReference type="InParanoid" id="Q5RDJ5"/>
<dbReference type="OMA" id="NTCKSYW"/>
<dbReference type="OrthoDB" id="260519at2759"/>
<dbReference type="TreeFam" id="TF314537"/>
<dbReference type="Proteomes" id="UP000001595">
    <property type="component" value="Chromosome 16"/>
</dbReference>
<dbReference type="GO" id="GO:0005741">
    <property type="term" value="C:mitochondrial outer membrane"/>
    <property type="evidence" value="ECO:0007669"/>
    <property type="project" value="UniProtKB-SubCell"/>
</dbReference>
<dbReference type="GO" id="GO:1903958">
    <property type="term" value="C:nitric-oxide synthase complex"/>
    <property type="evidence" value="ECO:0007669"/>
    <property type="project" value="Ensembl"/>
</dbReference>
<dbReference type="GO" id="GO:0020037">
    <property type="term" value="F:heme binding"/>
    <property type="evidence" value="ECO:0007669"/>
    <property type="project" value="Ensembl"/>
</dbReference>
<dbReference type="GO" id="GO:0046872">
    <property type="term" value="F:metal ion binding"/>
    <property type="evidence" value="ECO:0007669"/>
    <property type="project" value="UniProtKB-KW"/>
</dbReference>
<dbReference type="GO" id="GO:0050421">
    <property type="term" value="F:nitrite reductase (NO-forming) activity"/>
    <property type="evidence" value="ECO:0007669"/>
    <property type="project" value="Ensembl"/>
</dbReference>
<dbReference type="GO" id="GO:0006809">
    <property type="term" value="P:nitric oxide biosynthetic process"/>
    <property type="evidence" value="ECO:0007669"/>
    <property type="project" value="Ensembl"/>
</dbReference>
<dbReference type="FunFam" id="3.10.120.10:FF:000002">
    <property type="entry name" value="Cytochrome b5 type B"/>
    <property type="match status" value="1"/>
</dbReference>
<dbReference type="Gene3D" id="3.10.120.10">
    <property type="entry name" value="Cytochrome b5-like heme/steroid binding domain"/>
    <property type="match status" value="1"/>
</dbReference>
<dbReference type="InterPro" id="IPR001199">
    <property type="entry name" value="Cyt_B5-like_heme/steroid-bd"/>
</dbReference>
<dbReference type="InterPro" id="IPR036400">
    <property type="entry name" value="Cyt_B5-like_heme/steroid_sf"/>
</dbReference>
<dbReference type="InterPro" id="IPR018506">
    <property type="entry name" value="Cyt_B5_heme-BS"/>
</dbReference>
<dbReference type="InterPro" id="IPR050668">
    <property type="entry name" value="Cytochrome_b5"/>
</dbReference>
<dbReference type="PANTHER" id="PTHR19359">
    <property type="entry name" value="CYTOCHROME B5"/>
    <property type="match status" value="1"/>
</dbReference>
<dbReference type="PANTHER" id="PTHR19359:SF95">
    <property type="entry name" value="CYTOCHROME B5 TYPE B"/>
    <property type="match status" value="1"/>
</dbReference>
<dbReference type="Pfam" id="PF00173">
    <property type="entry name" value="Cyt-b5"/>
    <property type="match status" value="1"/>
</dbReference>
<dbReference type="PRINTS" id="PR00363">
    <property type="entry name" value="CYTOCHROMEB5"/>
</dbReference>
<dbReference type="SMART" id="SM01117">
    <property type="entry name" value="Cyt-b5"/>
    <property type="match status" value="1"/>
</dbReference>
<dbReference type="SUPFAM" id="SSF55856">
    <property type="entry name" value="Cytochrome b5-like heme/steroid binding domain"/>
    <property type="match status" value="1"/>
</dbReference>
<dbReference type="PROSITE" id="PS00191">
    <property type="entry name" value="CYTOCHROME_B5_1"/>
    <property type="match status" value="1"/>
</dbReference>
<dbReference type="PROSITE" id="PS50255">
    <property type="entry name" value="CYTOCHROME_B5_2"/>
    <property type="match status" value="1"/>
</dbReference>
<accession>Q5RDJ5</accession>
<keyword id="KW-0007">Acetylation</keyword>
<keyword id="KW-0249">Electron transport</keyword>
<keyword id="KW-0349">Heme</keyword>
<keyword id="KW-0408">Iron</keyword>
<keyword id="KW-0472">Membrane</keyword>
<keyword id="KW-0479">Metal-binding</keyword>
<keyword id="KW-0488">Methylation</keyword>
<keyword id="KW-0496">Mitochondrion</keyword>
<keyword id="KW-1000">Mitochondrion outer membrane</keyword>
<keyword id="KW-0597">Phosphoprotein</keyword>
<keyword id="KW-1185">Reference proteome</keyword>
<keyword id="KW-0812">Transmembrane</keyword>
<keyword id="KW-1133">Transmembrane helix</keyword>
<keyword id="KW-0813">Transport</keyword>
<gene>
    <name type="primary">CYB5B</name>
    <name type="synonym">CYB5M</name>
</gene>
<protein>
    <recommendedName>
        <fullName>Cytochrome b5 type B</fullName>
    </recommendedName>
    <alternativeName>
        <fullName>Cytochrome b5 outer mitochondrial membrane isoform</fullName>
    </alternativeName>
</protein>
<sequence length="150" mass="16750">MSGSMATAEASGSDGKGQEVETSVTYYRMEEVAKRNSLKELWLVIHGRVYDVTRFLNEHPGGEEVLLEQAGVDASESFEDVGHSSDAREMLKQYYIGDIHPSDLKPENGSKDPSKNDTCKSCWAYWILPIIGAVLLGFLYRYYTPESKSS</sequence>
<evidence type="ECO:0000250" key="1"/>
<evidence type="ECO:0000250" key="2">
    <source>
        <dbReference type="UniProtKB" id="O43169"/>
    </source>
</evidence>
<evidence type="ECO:0000250" key="3">
    <source>
        <dbReference type="UniProtKB" id="P04166"/>
    </source>
</evidence>
<evidence type="ECO:0000250" key="4">
    <source>
        <dbReference type="UniProtKB" id="Q9CQX2"/>
    </source>
</evidence>
<evidence type="ECO:0000255" key="5"/>
<evidence type="ECO:0000255" key="6">
    <source>
        <dbReference type="PROSITE-ProRule" id="PRU00279"/>
    </source>
</evidence>
<evidence type="ECO:0000256" key="7">
    <source>
        <dbReference type="SAM" id="MobiDB-lite"/>
    </source>
</evidence>
<evidence type="ECO:0000305" key="8"/>
<proteinExistence type="evidence at transcript level"/>
<feature type="propeptide" id="PRO_0000006475" evidence="3">
    <location>
        <begin position="1"/>
        <end position="15"/>
    </location>
</feature>
<feature type="chain" id="PRO_0000006476" description="Cytochrome b5 type B">
    <location>
        <begin position="16"/>
        <end position="150"/>
    </location>
</feature>
<feature type="transmembrane region" description="Helical" evidence="5">
    <location>
        <begin position="122"/>
        <end position="144"/>
    </location>
</feature>
<feature type="domain" description="Cytochrome b5 heme-binding" evidence="6">
    <location>
        <begin position="24"/>
        <end position="100"/>
    </location>
</feature>
<feature type="region of interest" description="Disordered" evidence="7">
    <location>
        <begin position="1"/>
        <end position="21"/>
    </location>
</feature>
<feature type="binding site" description="axial binding residue" evidence="6">
    <location>
        <position position="59"/>
    </location>
    <ligand>
        <name>heme</name>
        <dbReference type="ChEBI" id="CHEBI:30413"/>
    </ligand>
    <ligandPart>
        <name>Fe</name>
        <dbReference type="ChEBI" id="CHEBI:18248"/>
    </ligandPart>
</feature>
<feature type="binding site" description="axial binding residue" evidence="6">
    <location>
        <position position="83"/>
    </location>
    <ligand>
        <name>heme</name>
        <dbReference type="ChEBI" id="CHEBI:30413"/>
    </ligand>
    <ligandPart>
        <name>Fe</name>
        <dbReference type="ChEBI" id="CHEBI:18248"/>
    </ligandPart>
</feature>
<feature type="modified residue" description="Phosphoserine" evidence="2">
    <location>
        <position position="23"/>
    </location>
</feature>
<feature type="modified residue" description="N6-acetyllysine" evidence="2">
    <location>
        <position position="34"/>
    </location>
</feature>
<feature type="modified residue" description="Phosphoserine" evidence="4">
    <location>
        <position position="37"/>
    </location>
</feature>
<feature type="modified residue" description="N6-methyllysine" evidence="2">
    <location>
        <position position="39"/>
    </location>
</feature>
<feature type="modified residue" description="Phosphoserine" evidence="4">
    <location>
        <position position="84"/>
    </location>
</feature>
<organism>
    <name type="scientific">Pongo abelii</name>
    <name type="common">Sumatran orangutan</name>
    <name type="synonym">Pongo pygmaeus abelii</name>
    <dbReference type="NCBI Taxonomy" id="9601"/>
    <lineage>
        <taxon>Eukaryota</taxon>
        <taxon>Metazoa</taxon>
        <taxon>Chordata</taxon>
        <taxon>Craniata</taxon>
        <taxon>Vertebrata</taxon>
        <taxon>Euteleostomi</taxon>
        <taxon>Mammalia</taxon>
        <taxon>Eutheria</taxon>
        <taxon>Euarchontoglires</taxon>
        <taxon>Primates</taxon>
        <taxon>Haplorrhini</taxon>
        <taxon>Catarrhini</taxon>
        <taxon>Hominidae</taxon>
        <taxon>Pongo</taxon>
    </lineage>
</organism>
<comment type="function">
    <text evidence="1">Cytochrome b5 is a membrane-bound hemoprotein functioning as an electron carrier for several membrane-bound oxygenases.</text>
</comment>
<comment type="subunit">
    <text evidence="1">Component of a complex composed of cytochrome b5, NADH-cytochrome b5 reductase (CYB5R3) and MTARC2.</text>
</comment>
<comment type="subcellular location">
    <subcellularLocation>
        <location evidence="3">Mitochondrion outer membrane</location>
    </subcellularLocation>
</comment>
<comment type="similarity">
    <text evidence="8">Belongs to the cytochrome b5 family.</text>
</comment>
<comment type="caution">
    <text evidence="8">It is uncertain whether Met-1 or Met-5 is the initiator.</text>
</comment>
<reference key="1">
    <citation type="submission" date="2004-11" db="EMBL/GenBank/DDBJ databases">
        <authorList>
            <consortium name="The German cDNA consortium"/>
        </authorList>
    </citation>
    <scope>NUCLEOTIDE SEQUENCE [LARGE SCALE MRNA]</scope>
    <source>
        <tissue>Brain cortex</tissue>
    </source>
</reference>
<name>CYB5B_PONAB</name>